<evidence type="ECO:0000255" key="1">
    <source>
        <dbReference type="HAMAP-Rule" id="MF_01579"/>
    </source>
</evidence>
<comment type="function">
    <text evidence="1">Specifically methylates the cytosine at position 1407 (m5C1407) of 16S rRNA.</text>
</comment>
<comment type="catalytic activity">
    <reaction evidence="1">
        <text>cytidine(1407) in 16S rRNA + S-adenosyl-L-methionine = 5-methylcytidine(1407) in 16S rRNA + S-adenosyl-L-homocysteine + H(+)</text>
        <dbReference type="Rhea" id="RHEA:42756"/>
        <dbReference type="Rhea" id="RHEA-COMP:10223"/>
        <dbReference type="Rhea" id="RHEA-COMP:10224"/>
        <dbReference type="ChEBI" id="CHEBI:15378"/>
        <dbReference type="ChEBI" id="CHEBI:57856"/>
        <dbReference type="ChEBI" id="CHEBI:59789"/>
        <dbReference type="ChEBI" id="CHEBI:74483"/>
        <dbReference type="ChEBI" id="CHEBI:82748"/>
        <dbReference type="EC" id="2.1.1.178"/>
    </reaction>
</comment>
<comment type="subcellular location">
    <subcellularLocation>
        <location evidence="1">Cytoplasm</location>
    </subcellularLocation>
</comment>
<comment type="similarity">
    <text evidence="1">Belongs to the class I-like SAM-binding methyltransferase superfamily. RsmB/NOP family.</text>
</comment>
<gene>
    <name evidence="1" type="primary">rsmF</name>
    <name type="ordered locus">SG1266</name>
</gene>
<protein>
    <recommendedName>
        <fullName evidence="1">Ribosomal RNA small subunit methyltransferase F</fullName>
        <ecNumber evidence="1">2.1.1.178</ecNumber>
    </recommendedName>
    <alternativeName>
        <fullName evidence="1">16S rRNA m5C1407 methyltransferase</fullName>
    </alternativeName>
    <alternativeName>
        <fullName evidence="1">rRNA (cytosine-C(5)-)-methyltransferase RsmF</fullName>
    </alternativeName>
</protein>
<keyword id="KW-0963">Cytoplasm</keyword>
<keyword id="KW-0489">Methyltransferase</keyword>
<keyword id="KW-0694">RNA-binding</keyword>
<keyword id="KW-0698">rRNA processing</keyword>
<keyword id="KW-0949">S-adenosyl-L-methionine</keyword>
<keyword id="KW-0808">Transferase</keyword>
<proteinExistence type="inferred from homology"/>
<reference key="1">
    <citation type="journal article" date="2008" name="Genome Res.">
        <title>Comparative genome analysis of Salmonella enteritidis PT4 and Salmonella gallinarum 287/91 provides insights into evolutionary and host adaptation pathways.</title>
        <authorList>
            <person name="Thomson N.R."/>
            <person name="Clayton D.J."/>
            <person name="Windhorst D."/>
            <person name="Vernikos G."/>
            <person name="Davidson S."/>
            <person name="Churcher C."/>
            <person name="Quail M.A."/>
            <person name="Stevens M."/>
            <person name="Jones M.A."/>
            <person name="Watson M."/>
            <person name="Barron A."/>
            <person name="Layton A."/>
            <person name="Pickard D."/>
            <person name="Kingsley R.A."/>
            <person name="Bignell A."/>
            <person name="Clark L."/>
            <person name="Harris B."/>
            <person name="Ormond D."/>
            <person name="Abdellah Z."/>
            <person name="Brooks K."/>
            <person name="Cherevach I."/>
            <person name="Chillingworth T."/>
            <person name="Woodward J."/>
            <person name="Norberczak H."/>
            <person name="Lord A."/>
            <person name="Arrowsmith C."/>
            <person name="Jagels K."/>
            <person name="Moule S."/>
            <person name="Mungall K."/>
            <person name="Saunders M."/>
            <person name="Whitehead S."/>
            <person name="Chabalgoity J.A."/>
            <person name="Maskell D."/>
            <person name="Humphreys T."/>
            <person name="Roberts M."/>
            <person name="Barrow P.A."/>
            <person name="Dougan G."/>
            <person name="Parkhill J."/>
        </authorList>
    </citation>
    <scope>NUCLEOTIDE SEQUENCE [LARGE SCALE GENOMIC DNA]</scope>
    <source>
        <strain>287/91 / NCTC 13346</strain>
    </source>
</reference>
<dbReference type="EC" id="2.1.1.178" evidence="1"/>
<dbReference type="EMBL" id="AM933173">
    <property type="protein sequence ID" value="CAR37145.1"/>
    <property type="molecule type" value="Genomic_DNA"/>
</dbReference>
<dbReference type="RefSeq" id="WP_001531515.1">
    <property type="nucleotide sequence ID" value="NC_011274.1"/>
</dbReference>
<dbReference type="SMR" id="B5R8V2"/>
<dbReference type="KEGG" id="seg:SG1266"/>
<dbReference type="HOGENOM" id="CLU_005316_6_2_6"/>
<dbReference type="Proteomes" id="UP000008321">
    <property type="component" value="Chromosome"/>
</dbReference>
<dbReference type="GO" id="GO:0005737">
    <property type="term" value="C:cytoplasm"/>
    <property type="evidence" value="ECO:0007669"/>
    <property type="project" value="UniProtKB-SubCell"/>
</dbReference>
<dbReference type="GO" id="GO:0003723">
    <property type="term" value="F:RNA binding"/>
    <property type="evidence" value="ECO:0007669"/>
    <property type="project" value="UniProtKB-KW"/>
</dbReference>
<dbReference type="GO" id="GO:0009383">
    <property type="term" value="F:rRNA (cytosine-C5-)-methyltransferase activity"/>
    <property type="evidence" value="ECO:0007669"/>
    <property type="project" value="TreeGrafter"/>
</dbReference>
<dbReference type="GO" id="GO:0070475">
    <property type="term" value="P:rRNA base methylation"/>
    <property type="evidence" value="ECO:0007669"/>
    <property type="project" value="TreeGrafter"/>
</dbReference>
<dbReference type="FunFam" id="3.10.450.720:FF:000001">
    <property type="entry name" value="Ribosomal RNA small subunit methyltransferase F"/>
    <property type="match status" value="1"/>
</dbReference>
<dbReference type="FunFam" id="3.40.50.150:FF:000079">
    <property type="entry name" value="Ribosomal RNA small subunit methyltransferase F"/>
    <property type="match status" value="1"/>
</dbReference>
<dbReference type="Gene3D" id="3.10.450.720">
    <property type="match status" value="1"/>
</dbReference>
<dbReference type="Gene3D" id="3.40.50.150">
    <property type="entry name" value="Vaccinia Virus protein VP39"/>
    <property type="match status" value="1"/>
</dbReference>
<dbReference type="HAMAP" id="MF_01579">
    <property type="entry name" value="16SrRNA_methyltr_F"/>
    <property type="match status" value="1"/>
</dbReference>
<dbReference type="InterPro" id="IPR031341">
    <property type="entry name" value="Methyltr_RsmF_N"/>
</dbReference>
<dbReference type="InterPro" id="IPR049560">
    <property type="entry name" value="MeTrfase_RsmB-F_NOP2_cat"/>
</dbReference>
<dbReference type="InterPro" id="IPR001678">
    <property type="entry name" value="MeTrfase_RsmB-F_NOP2_dom"/>
</dbReference>
<dbReference type="InterPro" id="IPR027391">
    <property type="entry name" value="Nol1_Nop2_Fmu_2"/>
</dbReference>
<dbReference type="InterPro" id="IPR011023">
    <property type="entry name" value="Nop2p"/>
</dbReference>
<dbReference type="InterPro" id="IPR023267">
    <property type="entry name" value="RCMT"/>
</dbReference>
<dbReference type="InterPro" id="IPR023545">
    <property type="entry name" value="rRNA_ssu_MeTfrase_F"/>
</dbReference>
<dbReference type="InterPro" id="IPR018314">
    <property type="entry name" value="RsmB/NOL1/NOP2-like_CS"/>
</dbReference>
<dbReference type="InterPro" id="IPR029063">
    <property type="entry name" value="SAM-dependent_MTases_sf"/>
</dbReference>
<dbReference type="InterPro" id="IPR048457">
    <property type="entry name" value="YebU_pre-PUA_dom"/>
</dbReference>
<dbReference type="NCBIfam" id="TIGR00446">
    <property type="entry name" value="nop2p"/>
    <property type="match status" value="1"/>
</dbReference>
<dbReference type="NCBIfam" id="NF008898">
    <property type="entry name" value="PRK11933.1"/>
    <property type="match status" value="1"/>
</dbReference>
<dbReference type="PANTHER" id="PTHR22807:SF30">
    <property type="entry name" value="28S RRNA (CYTOSINE(4447)-C(5))-METHYLTRANSFERASE-RELATED"/>
    <property type="match status" value="1"/>
</dbReference>
<dbReference type="PANTHER" id="PTHR22807">
    <property type="entry name" value="NOP2 YEAST -RELATED NOL1/NOP2/FMU SUN DOMAIN-CONTAINING"/>
    <property type="match status" value="1"/>
</dbReference>
<dbReference type="Pfam" id="PF01189">
    <property type="entry name" value="Methyltr_RsmB-F"/>
    <property type="match status" value="1"/>
</dbReference>
<dbReference type="Pfam" id="PF17125">
    <property type="entry name" value="Methyltr_RsmF_N"/>
    <property type="match status" value="1"/>
</dbReference>
<dbReference type="Pfam" id="PF13636">
    <property type="entry name" value="Methyltranf_PUA"/>
    <property type="match status" value="1"/>
</dbReference>
<dbReference type="Pfam" id="PF21150">
    <property type="entry name" value="YebU_pre-PUA_dom"/>
    <property type="match status" value="1"/>
</dbReference>
<dbReference type="PRINTS" id="PR02008">
    <property type="entry name" value="RCMTFAMILY"/>
</dbReference>
<dbReference type="SUPFAM" id="SSF53335">
    <property type="entry name" value="S-adenosyl-L-methionine-dependent methyltransferases"/>
    <property type="match status" value="1"/>
</dbReference>
<dbReference type="PROSITE" id="PS01153">
    <property type="entry name" value="NOL1_NOP2_SUN"/>
    <property type="match status" value="1"/>
</dbReference>
<dbReference type="PROSITE" id="PS51686">
    <property type="entry name" value="SAM_MT_RSMB_NOP"/>
    <property type="match status" value="1"/>
</dbReference>
<organism>
    <name type="scientific">Salmonella gallinarum (strain 287/91 / NCTC 13346)</name>
    <dbReference type="NCBI Taxonomy" id="550538"/>
    <lineage>
        <taxon>Bacteria</taxon>
        <taxon>Pseudomonadati</taxon>
        <taxon>Pseudomonadota</taxon>
        <taxon>Gammaproteobacteria</taxon>
        <taxon>Enterobacterales</taxon>
        <taxon>Enterobacteriaceae</taxon>
        <taxon>Salmonella</taxon>
    </lineage>
</organism>
<accession>B5R8V2</accession>
<feature type="chain" id="PRO_1000147575" description="Ribosomal RNA small subunit methyltransferase F">
    <location>
        <begin position="1"/>
        <end position="479"/>
    </location>
</feature>
<feature type="active site" description="Nucleophile" evidence="1">
    <location>
        <position position="247"/>
    </location>
</feature>
<feature type="binding site" evidence="1">
    <location>
        <begin position="125"/>
        <end position="131"/>
    </location>
    <ligand>
        <name>S-adenosyl-L-methionine</name>
        <dbReference type="ChEBI" id="CHEBI:59789"/>
    </ligand>
</feature>
<feature type="binding site" evidence="1">
    <location>
        <position position="149"/>
    </location>
    <ligand>
        <name>S-adenosyl-L-methionine</name>
        <dbReference type="ChEBI" id="CHEBI:59789"/>
    </ligand>
</feature>
<feature type="binding site" evidence="1">
    <location>
        <position position="176"/>
    </location>
    <ligand>
        <name>S-adenosyl-L-methionine</name>
        <dbReference type="ChEBI" id="CHEBI:59789"/>
    </ligand>
</feature>
<feature type="binding site" evidence="1">
    <location>
        <position position="194"/>
    </location>
    <ligand>
        <name>S-adenosyl-L-methionine</name>
        <dbReference type="ChEBI" id="CHEBI:59789"/>
    </ligand>
</feature>
<name>RSMF_SALG2</name>
<sequence>MAQHAVYFPDAFLTQMREAMPSTLSFDEFISACQRPLRRSIRINTLKISVADFLALIAPYGWSLTPIPWCHEGFWIERDDEEALPLGSTAEHLSGLFYIQEASSMLPVAALFADDNHPQRVMDMAAAPGSKTTQIAARMGNRGAILANEFSASRVKVLHANISRCGIANTALTHFDGRVFGAALPEMFDAILLDAPCSGEGVVRKDPDALKNWSPESNLDIAATQRELLNSAFHALRPGGTLVYSTCTLNRQENEEVCLWLKETYADAVEFLPLGDLFPDADRALTPEGFLHVFPQIYDCEGFFVARLRKMSSLPAMPAPGYKVGAFPFTPLKGREALHVTQAANAVGLLWDENLHLWQREKEVWLFPAEIESLIGKVRFSRLGIKLAESHNKGYRWQHEATIALACPTHAHAFELSVQEAEEWYRGRDIYPQTPPAADDVLVTFQHQPLGLAKRIGARIKNSYPRELVRDGKLFTGNS</sequence>